<name>HIS7_CALMQ</name>
<gene>
    <name evidence="1" type="primary">hisB</name>
    <name type="ordered locus">Cmaq_1402</name>
</gene>
<accession>A8M909</accession>
<protein>
    <recommendedName>
        <fullName evidence="1">Imidazoleglycerol-phosphate dehydratase</fullName>
        <shortName evidence="1">IGPD</shortName>
        <ecNumber evidence="1">4.2.1.19</ecNumber>
    </recommendedName>
</protein>
<keyword id="KW-0028">Amino-acid biosynthesis</keyword>
<keyword id="KW-0963">Cytoplasm</keyword>
<keyword id="KW-0368">Histidine biosynthesis</keyword>
<keyword id="KW-0456">Lyase</keyword>
<keyword id="KW-1185">Reference proteome</keyword>
<reference key="1">
    <citation type="submission" date="2007-10" db="EMBL/GenBank/DDBJ databases">
        <title>Complete sequence of Caldivirga maquilingensis IC-167.</title>
        <authorList>
            <consortium name="US DOE Joint Genome Institute"/>
            <person name="Copeland A."/>
            <person name="Lucas S."/>
            <person name="Lapidus A."/>
            <person name="Barry K."/>
            <person name="Glavina del Rio T."/>
            <person name="Dalin E."/>
            <person name="Tice H."/>
            <person name="Pitluck S."/>
            <person name="Saunders E."/>
            <person name="Brettin T."/>
            <person name="Bruce D."/>
            <person name="Detter J.C."/>
            <person name="Han C."/>
            <person name="Schmutz J."/>
            <person name="Larimer F."/>
            <person name="Land M."/>
            <person name="Hauser L."/>
            <person name="Kyrpides N."/>
            <person name="Ivanova N."/>
            <person name="Biddle J.F."/>
            <person name="Zhang Z."/>
            <person name="Fitz-Gibbon S.T."/>
            <person name="Lowe T.M."/>
            <person name="Saltikov C."/>
            <person name="House C.H."/>
            <person name="Richardson P."/>
        </authorList>
    </citation>
    <scope>NUCLEOTIDE SEQUENCE [LARGE SCALE GENOMIC DNA]</scope>
    <source>
        <strain>ATCC 700844 / DSM 13496 / JCM 10307 / IC-167</strain>
    </source>
</reference>
<proteinExistence type="inferred from homology"/>
<organism>
    <name type="scientific">Caldivirga maquilingensis (strain ATCC 700844 / DSM 13496 / JCM 10307 / IC-167)</name>
    <dbReference type="NCBI Taxonomy" id="397948"/>
    <lineage>
        <taxon>Archaea</taxon>
        <taxon>Thermoproteota</taxon>
        <taxon>Thermoprotei</taxon>
        <taxon>Thermoproteales</taxon>
        <taxon>Thermoproteaceae</taxon>
        <taxon>Caldivirga</taxon>
    </lineage>
</organism>
<dbReference type="EC" id="4.2.1.19" evidence="1"/>
<dbReference type="EMBL" id="CP000852">
    <property type="protein sequence ID" value="ABW02228.1"/>
    <property type="molecule type" value="Genomic_DNA"/>
</dbReference>
<dbReference type="RefSeq" id="WP_012186447.1">
    <property type="nucleotide sequence ID" value="NC_009954.1"/>
</dbReference>
<dbReference type="SMR" id="A8M909"/>
<dbReference type="STRING" id="397948.Cmaq_1402"/>
<dbReference type="GeneID" id="5709482"/>
<dbReference type="KEGG" id="cma:Cmaq_1402"/>
<dbReference type="eggNOG" id="arCOG04398">
    <property type="taxonomic scope" value="Archaea"/>
</dbReference>
<dbReference type="HOGENOM" id="CLU_044308_3_0_2"/>
<dbReference type="OrthoDB" id="103579at2157"/>
<dbReference type="UniPathway" id="UPA00031">
    <property type="reaction ID" value="UER00011"/>
</dbReference>
<dbReference type="Proteomes" id="UP000001137">
    <property type="component" value="Chromosome"/>
</dbReference>
<dbReference type="GO" id="GO:0005737">
    <property type="term" value="C:cytoplasm"/>
    <property type="evidence" value="ECO:0007669"/>
    <property type="project" value="UniProtKB-SubCell"/>
</dbReference>
<dbReference type="GO" id="GO:0004424">
    <property type="term" value="F:imidazoleglycerol-phosphate dehydratase activity"/>
    <property type="evidence" value="ECO:0007669"/>
    <property type="project" value="UniProtKB-UniRule"/>
</dbReference>
<dbReference type="GO" id="GO:0000105">
    <property type="term" value="P:L-histidine biosynthetic process"/>
    <property type="evidence" value="ECO:0007669"/>
    <property type="project" value="UniProtKB-UniRule"/>
</dbReference>
<dbReference type="CDD" id="cd07914">
    <property type="entry name" value="IGPD"/>
    <property type="match status" value="1"/>
</dbReference>
<dbReference type="FunFam" id="3.30.230.40:FF:000001">
    <property type="entry name" value="Imidazoleglycerol-phosphate dehydratase HisB"/>
    <property type="match status" value="1"/>
</dbReference>
<dbReference type="FunFam" id="3.30.230.40:FF:000003">
    <property type="entry name" value="Imidazoleglycerol-phosphate dehydratase HisB"/>
    <property type="match status" value="1"/>
</dbReference>
<dbReference type="Gene3D" id="3.30.230.40">
    <property type="entry name" value="Imidazole glycerol phosphate dehydratase, domain 1"/>
    <property type="match status" value="2"/>
</dbReference>
<dbReference type="HAMAP" id="MF_00076">
    <property type="entry name" value="HisB"/>
    <property type="match status" value="1"/>
</dbReference>
<dbReference type="InterPro" id="IPR038494">
    <property type="entry name" value="IGPD_sf"/>
</dbReference>
<dbReference type="InterPro" id="IPR000807">
    <property type="entry name" value="ImidazoleglycerolP_deHydtase"/>
</dbReference>
<dbReference type="InterPro" id="IPR020565">
    <property type="entry name" value="ImidazoleglycerP_deHydtase_CS"/>
</dbReference>
<dbReference type="InterPro" id="IPR020568">
    <property type="entry name" value="Ribosomal_Su5_D2-typ_SF"/>
</dbReference>
<dbReference type="PANTHER" id="PTHR23133:SF2">
    <property type="entry name" value="IMIDAZOLEGLYCEROL-PHOSPHATE DEHYDRATASE"/>
    <property type="match status" value="1"/>
</dbReference>
<dbReference type="PANTHER" id="PTHR23133">
    <property type="entry name" value="IMIDAZOLEGLYCEROL-PHOSPHATE DEHYDRATASE HIS7"/>
    <property type="match status" value="1"/>
</dbReference>
<dbReference type="Pfam" id="PF00475">
    <property type="entry name" value="IGPD"/>
    <property type="match status" value="1"/>
</dbReference>
<dbReference type="SUPFAM" id="SSF54211">
    <property type="entry name" value="Ribosomal protein S5 domain 2-like"/>
    <property type="match status" value="2"/>
</dbReference>
<dbReference type="PROSITE" id="PS00955">
    <property type="entry name" value="IGP_DEHYDRATASE_2"/>
    <property type="match status" value="1"/>
</dbReference>
<comment type="catalytic activity">
    <reaction evidence="1">
        <text>D-erythro-1-(imidazol-4-yl)glycerol 3-phosphate = 3-(imidazol-4-yl)-2-oxopropyl phosphate + H2O</text>
        <dbReference type="Rhea" id="RHEA:11040"/>
        <dbReference type="ChEBI" id="CHEBI:15377"/>
        <dbReference type="ChEBI" id="CHEBI:57766"/>
        <dbReference type="ChEBI" id="CHEBI:58278"/>
        <dbReference type="EC" id="4.2.1.19"/>
    </reaction>
</comment>
<comment type="pathway">
    <text evidence="1">Amino-acid biosynthesis; L-histidine biosynthesis; L-histidine from 5-phospho-alpha-D-ribose 1-diphosphate: step 6/9.</text>
</comment>
<comment type="subcellular location">
    <subcellularLocation>
        <location evidence="1">Cytoplasm</location>
    </subcellularLocation>
</comment>
<comment type="similarity">
    <text evidence="1">Belongs to the imidazoleglycerol-phosphate dehydratase family.</text>
</comment>
<sequence>MPRSAVVERRTKETEVKVELSLEPGEVNVDTPVKFLNHMVETLIFYMGASGRVKAIDLRGFDDHHVVEDVAIVLGSTLDKALGDRTGLARFGWAIIPMDDALTLASVDLGGRVYFMFKGSFTRETVGDMATEMVPHFIRSLASSLRATIHVNVMWGENNHHIAESVFKALGLAIGQAIQVKGGGVPSLKGVL</sequence>
<evidence type="ECO:0000255" key="1">
    <source>
        <dbReference type="HAMAP-Rule" id="MF_00076"/>
    </source>
</evidence>
<feature type="chain" id="PRO_0000336359" description="Imidazoleglycerol-phosphate dehydratase">
    <location>
        <begin position="1"/>
        <end position="192"/>
    </location>
</feature>